<feature type="chain" id="PRO_1000118501" description="Phosphomethylpyrimidine synthase">
    <location>
        <begin position="1"/>
        <end position="586"/>
    </location>
</feature>
<feature type="region of interest" description="Disordered" evidence="2">
    <location>
        <begin position="1"/>
        <end position="59"/>
    </location>
</feature>
<feature type="compositionally biased region" description="Basic and acidic residues" evidence="2">
    <location>
        <begin position="22"/>
        <end position="39"/>
    </location>
</feature>
<feature type="binding site" evidence="1">
    <location>
        <position position="193"/>
    </location>
    <ligand>
        <name>substrate</name>
    </ligand>
</feature>
<feature type="binding site" evidence="1">
    <location>
        <position position="222"/>
    </location>
    <ligand>
        <name>substrate</name>
    </ligand>
</feature>
<feature type="binding site" evidence="1">
    <location>
        <position position="251"/>
    </location>
    <ligand>
        <name>substrate</name>
    </ligand>
</feature>
<feature type="binding site" evidence="1">
    <location>
        <position position="287"/>
    </location>
    <ligand>
        <name>substrate</name>
    </ligand>
</feature>
<feature type="binding site" evidence="1">
    <location>
        <begin position="307"/>
        <end position="309"/>
    </location>
    <ligand>
        <name>substrate</name>
    </ligand>
</feature>
<feature type="binding site" evidence="1">
    <location>
        <begin position="348"/>
        <end position="351"/>
    </location>
    <ligand>
        <name>substrate</name>
    </ligand>
</feature>
<feature type="binding site" evidence="1">
    <location>
        <position position="387"/>
    </location>
    <ligand>
        <name>substrate</name>
    </ligand>
</feature>
<feature type="binding site" evidence="1">
    <location>
        <position position="391"/>
    </location>
    <ligand>
        <name>Zn(2+)</name>
        <dbReference type="ChEBI" id="CHEBI:29105"/>
    </ligand>
</feature>
<feature type="binding site" evidence="1">
    <location>
        <position position="414"/>
    </location>
    <ligand>
        <name>substrate</name>
    </ligand>
</feature>
<feature type="binding site" evidence="1">
    <location>
        <position position="455"/>
    </location>
    <ligand>
        <name>Zn(2+)</name>
        <dbReference type="ChEBI" id="CHEBI:29105"/>
    </ligand>
</feature>
<feature type="binding site" evidence="1">
    <location>
        <position position="535"/>
    </location>
    <ligand>
        <name>[4Fe-4S] cluster</name>
        <dbReference type="ChEBI" id="CHEBI:49883"/>
        <note>4Fe-4S-S-AdoMet</note>
    </ligand>
</feature>
<feature type="binding site" evidence="1">
    <location>
        <position position="538"/>
    </location>
    <ligand>
        <name>[4Fe-4S] cluster</name>
        <dbReference type="ChEBI" id="CHEBI:49883"/>
        <note>4Fe-4S-S-AdoMet</note>
    </ligand>
</feature>
<feature type="binding site" evidence="1">
    <location>
        <position position="543"/>
    </location>
    <ligand>
        <name>[4Fe-4S] cluster</name>
        <dbReference type="ChEBI" id="CHEBI:49883"/>
        <note>4Fe-4S-S-AdoMet</note>
    </ligand>
</feature>
<sequence>MKQSVSAEQIELKSSLPGSKKVYVDGPREGMKVPMREIEQSDTNGVPNPPIRVYDTSGPYTDPAYKVELEKGIPTPRHSWILERGDVEAYEGREVKPEDDGVKVASKHTPVFPQMDRKPLRAKQGANVTQMHYARNGIITSEMEYVAIREGVDPEFVRKEIAEGRAILPANINHPEAEPMIIGRNFHVKVNANIGNSAVSSSIAEEVEKMTWATRWGADTIMDLSTGKNIHTTREWIIRNAPVPVGTVPIYQALEKVNGIAEDLTWEVYRDTLIEQAEQGVDYFTIHAGVLLRYIPITAKRTTGIVSRGGSIMAQWCLFHHKENFLYTHFEEICEIMKQYDVSFSLGDGLRPGSIADANDEAQFSELETLGELTKIAWKHDVQVMIEGPGHVPMHLIKENMEKELDICQGAPFYTLGPLTTDIAPGYDHITSAIGAAMIGWFGTAMLCYVTPKEHLGLPNKDDVREGVITYKIAAHAADLAKGHKTAHQRDDALSKARFEFRWRDQFNLSLDPERAMEYHDETLPAEGAKTAHFCSMCGPKFCSMRISHDIREYAKENDLETTEAIEKGMKEKAKEFKETGSHLYQ</sequence>
<name>THIC_BACC3</name>
<evidence type="ECO:0000255" key="1">
    <source>
        <dbReference type="HAMAP-Rule" id="MF_00089"/>
    </source>
</evidence>
<evidence type="ECO:0000256" key="2">
    <source>
        <dbReference type="SAM" id="MobiDB-lite"/>
    </source>
</evidence>
<keyword id="KW-0004">4Fe-4S</keyword>
<keyword id="KW-0408">Iron</keyword>
<keyword id="KW-0411">Iron-sulfur</keyword>
<keyword id="KW-0456">Lyase</keyword>
<keyword id="KW-0479">Metal-binding</keyword>
<keyword id="KW-0949">S-adenosyl-L-methionine</keyword>
<keyword id="KW-0784">Thiamine biosynthesis</keyword>
<keyword id="KW-0862">Zinc</keyword>
<protein>
    <recommendedName>
        <fullName evidence="1">Phosphomethylpyrimidine synthase</fullName>
        <ecNumber evidence="1">4.1.99.17</ecNumber>
    </recommendedName>
    <alternativeName>
        <fullName evidence="1">Hydroxymethylpyrimidine phosphate synthase</fullName>
        <shortName evidence="1">HMP-P synthase</shortName>
        <shortName evidence="1">HMP-phosphate synthase</shortName>
        <shortName evidence="1">HMPP synthase</shortName>
    </alternativeName>
    <alternativeName>
        <fullName evidence="1">Thiamine biosynthesis protein ThiC</fullName>
    </alternativeName>
</protein>
<proteinExistence type="inferred from homology"/>
<comment type="function">
    <text evidence="1">Catalyzes the synthesis of the hydroxymethylpyrimidine phosphate (HMP-P) moiety of thiamine from aminoimidazole ribotide (AIR) in a radical S-adenosyl-L-methionine (SAM)-dependent reaction.</text>
</comment>
<comment type="catalytic activity">
    <reaction evidence="1">
        <text>5-amino-1-(5-phospho-beta-D-ribosyl)imidazole + S-adenosyl-L-methionine = 4-amino-2-methyl-5-(phosphooxymethyl)pyrimidine + CO + 5'-deoxyadenosine + formate + L-methionine + 3 H(+)</text>
        <dbReference type="Rhea" id="RHEA:24840"/>
        <dbReference type="ChEBI" id="CHEBI:15378"/>
        <dbReference type="ChEBI" id="CHEBI:15740"/>
        <dbReference type="ChEBI" id="CHEBI:17245"/>
        <dbReference type="ChEBI" id="CHEBI:17319"/>
        <dbReference type="ChEBI" id="CHEBI:57844"/>
        <dbReference type="ChEBI" id="CHEBI:58354"/>
        <dbReference type="ChEBI" id="CHEBI:59789"/>
        <dbReference type="ChEBI" id="CHEBI:137981"/>
        <dbReference type="EC" id="4.1.99.17"/>
    </reaction>
</comment>
<comment type="cofactor">
    <cofactor evidence="1">
        <name>[4Fe-4S] cluster</name>
        <dbReference type="ChEBI" id="CHEBI:49883"/>
    </cofactor>
    <text evidence="1">Binds 1 [4Fe-4S] cluster per subunit. The cluster is coordinated with 3 cysteines and an exchangeable S-adenosyl-L-methionine.</text>
</comment>
<comment type="pathway">
    <text evidence="1">Cofactor biosynthesis; thiamine diphosphate biosynthesis.</text>
</comment>
<comment type="similarity">
    <text evidence="1">Belongs to the ThiC family.</text>
</comment>
<accession>C1EZL5</accession>
<reference key="1">
    <citation type="submission" date="2009-02" db="EMBL/GenBank/DDBJ databases">
        <title>Genome sequence of Bacillus cereus 03BB102.</title>
        <authorList>
            <person name="Dodson R.J."/>
            <person name="Jackson P."/>
            <person name="Munk A.C."/>
            <person name="Brettin T."/>
            <person name="Bruce D."/>
            <person name="Detter C."/>
            <person name="Tapia R."/>
            <person name="Han C."/>
            <person name="Sutton G."/>
            <person name="Sims D."/>
        </authorList>
    </citation>
    <scope>NUCLEOTIDE SEQUENCE [LARGE SCALE GENOMIC DNA]</scope>
    <source>
        <strain>03BB102</strain>
    </source>
</reference>
<gene>
    <name evidence="1" type="primary">thiC</name>
    <name type="ordered locus">BCA_5363</name>
</gene>
<organism>
    <name type="scientific">Bacillus cereus (strain 03BB102)</name>
    <dbReference type="NCBI Taxonomy" id="572264"/>
    <lineage>
        <taxon>Bacteria</taxon>
        <taxon>Bacillati</taxon>
        <taxon>Bacillota</taxon>
        <taxon>Bacilli</taxon>
        <taxon>Bacillales</taxon>
        <taxon>Bacillaceae</taxon>
        <taxon>Bacillus</taxon>
        <taxon>Bacillus cereus group</taxon>
    </lineage>
</organism>
<dbReference type="EC" id="4.1.99.17" evidence="1"/>
<dbReference type="EMBL" id="CP001407">
    <property type="protein sequence ID" value="ACO28941.1"/>
    <property type="molecule type" value="Genomic_DNA"/>
</dbReference>
<dbReference type="RefSeq" id="WP_000814466.1">
    <property type="nucleotide sequence ID" value="NZ_CP009318.1"/>
</dbReference>
<dbReference type="SMR" id="C1EZL5"/>
<dbReference type="KEGG" id="bcx:BCA_5363"/>
<dbReference type="PATRIC" id="fig|572264.18.peg.5286"/>
<dbReference type="UniPathway" id="UPA00060"/>
<dbReference type="Proteomes" id="UP000002210">
    <property type="component" value="Chromosome"/>
</dbReference>
<dbReference type="GO" id="GO:0005829">
    <property type="term" value="C:cytosol"/>
    <property type="evidence" value="ECO:0007669"/>
    <property type="project" value="TreeGrafter"/>
</dbReference>
<dbReference type="GO" id="GO:0051539">
    <property type="term" value="F:4 iron, 4 sulfur cluster binding"/>
    <property type="evidence" value="ECO:0007669"/>
    <property type="project" value="UniProtKB-KW"/>
</dbReference>
<dbReference type="GO" id="GO:0016830">
    <property type="term" value="F:carbon-carbon lyase activity"/>
    <property type="evidence" value="ECO:0007669"/>
    <property type="project" value="InterPro"/>
</dbReference>
<dbReference type="GO" id="GO:0008270">
    <property type="term" value="F:zinc ion binding"/>
    <property type="evidence" value="ECO:0007669"/>
    <property type="project" value="UniProtKB-UniRule"/>
</dbReference>
<dbReference type="GO" id="GO:0009228">
    <property type="term" value="P:thiamine biosynthetic process"/>
    <property type="evidence" value="ECO:0007669"/>
    <property type="project" value="UniProtKB-KW"/>
</dbReference>
<dbReference type="GO" id="GO:0009229">
    <property type="term" value="P:thiamine diphosphate biosynthetic process"/>
    <property type="evidence" value="ECO:0007669"/>
    <property type="project" value="UniProtKB-UniRule"/>
</dbReference>
<dbReference type="FunFam" id="3.20.20.540:FF:000001">
    <property type="entry name" value="Phosphomethylpyrimidine synthase"/>
    <property type="match status" value="1"/>
</dbReference>
<dbReference type="Gene3D" id="6.10.250.620">
    <property type="match status" value="1"/>
</dbReference>
<dbReference type="Gene3D" id="3.20.20.540">
    <property type="entry name" value="Radical SAM ThiC family, central domain"/>
    <property type="match status" value="1"/>
</dbReference>
<dbReference type="HAMAP" id="MF_00089">
    <property type="entry name" value="ThiC"/>
    <property type="match status" value="1"/>
</dbReference>
<dbReference type="InterPro" id="IPR037509">
    <property type="entry name" value="ThiC"/>
</dbReference>
<dbReference type="InterPro" id="IPR025747">
    <property type="entry name" value="ThiC-associated_dom"/>
</dbReference>
<dbReference type="InterPro" id="IPR038521">
    <property type="entry name" value="ThiC/Bza_core_dom"/>
</dbReference>
<dbReference type="InterPro" id="IPR002817">
    <property type="entry name" value="ThiC/BzaA/B"/>
</dbReference>
<dbReference type="NCBIfam" id="NF006763">
    <property type="entry name" value="PRK09284.1"/>
    <property type="match status" value="1"/>
</dbReference>
<dbReference type="NCBIfam" id="NF009895">
    <property type="entry name" value="PRK13352.1"/>
    <property type="match status" value="1"/>
</dbReference>
<dbReference type="NCBIfam" id="TIGR00190">
    <property type="entry name" value="thiC"/>
    <property type="match status" value="1"/>
</dbReference>
<dbReference type="PANTHER" id="PTHR30557:SF1">
    <property type="entry name" value="PHOSPHOMETHYLPYRIMIDINE SYNTHASE, CHLOROPLASTIC"/>
    <property type="match status" value="1"/>
</dbReference>
<dbReference type="PANTHER" id="PTHR30557">
    <property type="entry name" value="THIAMINE BIOSYNTHESIS PROTEIN THIC"/>
    <property type="match status" value="1"/>
</dbReference>
<dbReference type="Pfam" id="PF13667">
    <property type="entry name" value="ThiC-associated"/>
    <property type="match status" value="1"/>
</dbReference>
<dbReference type="Pfam" id="PF01964">
    <property type="entry name" value="ThiC_Rad_SAM"/>
    <property type="match status" value="1"/>
</dbReference>
<dbReference type="SFLD" id="SFLDF00407">
    <property type="entry name" value="phosphomethylpyrimidine_syntha"/>
    <property type="match status" value="1"/>
</dbReference>
<dbReference type="SFLD" id="SFLDG01114">
    <property type="entry name" value="phosphomethylpyrimidine_syntha"/>
    <property type="match status" value="1"/>
</dbReference>
<dbReference type="SFLD" id="SFLDS00113">
    <property type="entry name" value="Radical_SAM_Phosphomethylpyrim"/>
    <property type="match status" value="1"/>
</dbReference>